<proteinExistence type="inferred from homology"/>
<protein>
    <recommendedName>
        <fullName evidence="2">D-alanine--D-alanine ligase</fullName>
        <ecNumber evidence="2">6.3.2.4</ecNumber>
    </recommendedName>
    <alternativeName>
        <fullName evidence="2">D-Ala-D-Ala ligase</fullName>
    </alternativeName>
    <alternativeName>
        <fullName evidence="2">D-alanylalanine synthetase</fullName>
    </alternativeName>
</protein>
<accession>A2S5U3</accession>
<keyword id="KW-0067">ATP-binding</keyword>
<keyword id="KW-0133">Cell shape</keyword>
<keyword id="KW-0961">Cell wall biogenesis/degradation</keyword>
<keyword id="KW-0963">Cytoplasm</keyword>
<keyword id="KW-0436">Ligase</keyword>
<keyword id="KW-0460">Magnesium</keyword>
<keyword id="KW-0464">Manganese</keyword>
<keyword id="KW-0479">Metal-binding</keyword>
<keyword id="KW-0547">Nucleotide-binding</keyword>
<keyword id="KW-0573">Peptidoglycan synthesis</keyword>
<organism>
    <name type="scientific">Burkholderia mallei (strain NCTC 10229)</name>
    <dbReference type="NCBI Taxonomy" id="412022"/>
    <lineage>
        <taxon>Bacteria</taxon>
        <taxon>Pseudomonadati</taxon>
        <taxon>Pseudomonadota</taxon>
        <taxon>Betaproteobacteria</taxon>
        <taxon>Burkholderiales</taxon>
        <taxon>Burkholderiaceae</taxon>
        <taxon>Burkholderia</taxon>
        <taxon>pseudomallei group</taxon>
    </lineage>
</organism>
<comment type="function">
    <text evidence="2">Cell wall formation.</text>
</comment>
<comment type="catalytic activity">
    <reaction evidence="2">
        <text>2 D-alanine + ATP = D-alanyl-D-alanine + ADP + phosphate + H(+)</text>
        <dbReference type="Rhea" id="RHEA:11224"/>
        <dbReference type="ChEBI" id="CHEBI:15378"/>
        <dbReference type="ChEBI" id="CHEBI:30616"/>
        <dbReference type="ChEBI" id="CHEBI:43474"/>
        <dbReference type="ChEBI" id="CHEBI:57416"/>
        <dbReference type="ChEBI" id="CHEBI:57822"/>
        <dbReference type="ChEBI" id="CHEBI:456216"/>
        <dbReference type="EC" id="6.3.2.4"/>
    </reaction>
</comment>
<comment type="cofactor">
    <cofactor evidence="1">
        <name>Mg(2+)</name>
        <dbReference type="ChEBI" id="CHEBI:18420"/>
    </cofactor>
    <cofactor evidence="1">
        <name>Mn(2+)</name>
        <dbReference type="ChEBI" id="CHEBI:29035"/>
    </cofactor>
    <text evidence="1">Binds 2 magnesium or manganese ions per subunit.</text>
</comment>
<comment type="pathway">
    <text evidence="2">Cell wall biogenesis; peptidoglycan biosynthesis.</text>
</comment>
<comment type="subcellular location">
    <subcellularLocation>
        <location evidence="2">Cytoplasm</location>
    </subcellularLocation>
</comment>
<comment type="similarity">
    <text evidence="2">Belongs to the D-alanine--D-alanine ligase family.</text>
</comment>
<sequence length="312" mass="33341">MSGIDPKRFGKVAVLLGGDSAEREVSLNSGRLVLQGLRDAGIDAHPFDPAQRPLAALKDEGFVRAFNALHGGYGENGQIQGALDFYGIRYTGSGVLGSALGLDKFRTKLVWQQTGIPTPPFETVMRGDDYAARAQDIVAKLGVPLFVKPASEGSSVAVEKVKSADALPAALEEAAKHDKIVIVEKSIEGGGEYTACIAADLDLPLIRIVPAGEFYDYHAKYIANDTQYLIPCGLDAAKEAEFKRIARRAFDVLGCTDWGRADFMLDAAGNPYFLEVNTAPGMTDHSLPPKAARAVGIGYSELVVKVLSLTLD</sequence>
<gene>
    <name evidence="2" type="primary">ddl</name>
    <name type="ordered locus">BMA10229_A1329</name>
</gene>
<reference key="1">
    <citation type="journal article" date="2010" name="Genome Biol. Evol.">
        <title>Continuing evolution of Burkholderia mallei through genome reduction and large-scale rearrangements.</title>
        <authorList>
            <person name="Losada L."/>
            <person name="Ronning C.M."/>
            <person name="DeShazer D."/>
            <person name="Woods D."/>
            <person name="Fedorova N."/>
            <person name="Kim H.S."/>
            <person name="Shabalina S.A."/>
            <person name="Pearson T.R."/>
            <person name="Brinkac L."/>
            <person name="Tan P."/>
            <person name="Nandi T."/>
            <person name="Crabtree J."/>
            <person name="Badger J."/>
            <person name="Beckstrom-Sternberg S."/>
            <person name="Saqib M."/>
            <person name="Schutzer S.E."/>
            <person name="Keim P."/>
            <person name="Nierman W.C."/>
        </authorList>
    </citation>
    <scope>NUCLEOTIDE SEQUENCE [LARGE SCALE GENOMIC DNA]</scope>
    <source>
        <strain>NCTC 10229</strain>
    </source>
</reference>
<name>DDL_BURM9</name>
<feature type="chain" id="PRO_0000341071" description="D-alanine--D-alanine ligase">
    <location>
        <begin position="1"/>
        <end position="312"/>
    </location>
</feature>
<feature type="domain" description="ATP-grasp" evidence="2">
    <location>
        <begin position="108"/>
        <end position="308"/>
    </location>
</feature>
<feature type="binding site" evidence="2">
    <location>
        <begin position="138"/>
        <end position="193"/>
    </location>
    <ligand>
        <name>ATP</name>
        <dbReference type="ChEBI" id="CHEBI:30616"/>
    </ligand>
</feature>
<feature type="binding site" evidence="2">
    <location>
        <position position="262"/>
    </location>
    <ligand>
        <name>Mg(2+)</name>
        <dbReference type="ChEBI" id="CHEBI:18420"/>
        <label>1</label>
    </ligand>
</feature>
<feature type="binding site" evidence="2">
    <location>
        <position position="275"/>
    </location>
    <ligand>
        <name>Mg(2+)</name>
        <dbReference type="ChEBI" id="CHEBI:18420"/>
        <label>1</label>
    </ligand>
</feature>
<feature type="binding site" evidence="2">
    <location>
        <position position="275"/>
    </location>
    <ligand>
        <name>Mg(2+)</name>
        <dbReference type="ChEBI" id="CHEBI:18420"/>
        <label>2</label>
    </ligand>
</feature>
<feature type="binding site" evidence="2">
    <location>
        <position position="277"/>
    </location>
    <ligand>
        <name>Mg(2+)</name>
        <dbReference type="ChEBI" id="CHEBI:18420"/>
        <label>2</label>
    </ligand>
</feature>
<dbReference type="EC" id="6.3.2.4" evidence="2"/>
<dbReference type="EMBL" id="CP000546">
    <property type="protein sequence ID" value="ABN02040.1"/>
    <property type="molecule type" value="Genomic_DNA"/>
</dbReference>
<dbReference type="RefSeq" id="WP_004194254.1">
    <property type="nucleotide sequence ID" value="NC_008836.1"/>
</dbReference>
<dbReference type="SMR" id="A2S5U3"/>
<dbReference type="KEGG" id="bml:BMA10229_A1329"/>
<dbReference type="HOGENOM" id="CLU_039268_1_2_4"/>
<dbReference type="UniPathway" id="UPA00219"/>
<dbReference type="Proteomes" id="UP000002283">
    <property type="component" value="Chromosome I"/>
</dbReference>
<dbReference type="GO" id="GO:0005829">
    <property type="term" value="C:cytosol"/>
    <property type="evidence" value="ECO:0007669"/>
    <property type="project" value="TreeGrafter"/>
</dbReference>
<dbReference type="GO" id="GO:0005524">
    <property type="term" value="F:ATP binding"/>
    <property type="evidence" value="ECO:0007669"/>
    <property type="project" value="UniProtKB-KW"/>
</dbReference>
<dbReference type="GO" id="GO:0008716">
    <property type="term" value="F:D-alanine-D-alanine ligase activity"/>
    <property type="evidence" value="ECO:0007669"/>
    <property type="project" value="UniProtKB-UniRule"/>
</dbReference>
<dbReference type="GO" id="GO:0046872">
    <property type="term" value="F:metal ion binding"/>
    <property type="evidence" value="ECO:0007669"/>
    <property type="project" value="UniProtKB-KW"/>
</dbReference>
<dbReference type="GO" id="GO:0071555">
    <property type="term" value="P:cell wall organization"/>
    <property type="evidence" value="ECO:0007669"/>
    <property type="project" value="UniProtKB-KW"/>
</dbReference>
<dbReference type="GO" id="GO:0009252">
    <property type="term" value="P:peptidoglycan biosynthetic process"/>
    <property type="evidence" value="ECO:0007669"/>
    <property type="project" value="UniProtKB-UniRule"/>
</dbReference>
<dbReference type="GO" id="GO:0008360">
    <property type="term" value="P:regulation of cell shape"/>
    <property type="evidence" value="ECO:0007669"/>
    <property type="project" value="UniProtKB-KW"/>
</dbReference>
<dbReference type="FunFam" id="3.30.1490.20:FF:000007">
    <property type="entry name" value="D-alanine--D-alanine ligase"/>
    <property type="match status" value="1"/>
</dbReference>
<dbReference type="FunFam" id="3.30.470.20:FF:000008">
    <property type="entry name" value="D-alanine--D-alanine ligase"/>
    <property type="match status" value="1"/>
</dbReference>
<dbReference type="FunFam" id="3.40.50.20:FF:000013">
    <property type="entry name" value="D-alanine--D-alanine ligase"/>
    <property type="match status" value="1"/>
</dbReference>
<dbReference type="Gene3D" id="3.40.50.20">
    <property type="match status" value="1"/>
</dbReference>
<dbReference type="Gene3D" id="3.30.1490.20">
    <property type="entry name" value="ATP-grasp fold, A domain"/>
    <property type="match status" value="1"/>
</dbReference>
<dbReference type="Gene3D" id="3.30.470.20">
    <property type="entry name" value="ATP-grasp fold, B domain"/>
    <property type="match status" value="1"/>
</dbReference>
<dbReference type="HAMAP" id="MF_00047">
    <property type="entry name" value="Dala_Dala_lig"/>
    <property type="match status" value="1"/>
</dbReference>
<dbReference type="InterPro" id="IPR011761">
    <property type="entry name" value="ATP-grasp"/>
</dbReference>
<dbReference type="InterPro" id="IPR013815">
    <property type="entry name" value="ATP_grasp_subdomain_1"/>
</dbReference>
<dbReference type="InterPro" id="IPR000291">
    <property type="entry name" value="D-Ala_lig_Van_CS"/>
</dbReference>
<dbReference type="InterPro" id="IPR005905">
    <property type="entry name" value="D_ala_D_ala"/>
</dbReference>
<dbReference type="InterPro" id="IPR011095">
    <property type="entry name" value="Dala_Dala_lig_C"/>
</dbReference>
<dbReference type="InterPro" id="IPR011127">
    <property type="entry name" value="Dala_Dala_lig_N"/>
</dbReference>
<dbReference type="InterPro" id="IPR016185">
    <property type="entry name" value="PreATP-grasp_dom_sf"/>
</dbReference>
<dbReference type="NCBIfam" id="TIGR01205">
    <property type="entry name" value="D_ala_D_alaTIGR"/>
    <property type="match status" value="1"/>
</dbReference>
<dbReference type="NCBIfam" id="NF002378">
    <property type="entry name" value="PRK01372.1"/>
    <property type="match status" value="1"/>
</dbReference>
<dbReference type="PANTHER" id="PTHR23132">
    <property type="entry name" value="D-ALANINE--D-ALANINE LIGASE"/>
    <property type="match status" value="1"/>
</dbReference>
<dbReference type="PANTHER" id="PTHR23132:SF23">
    <property type="entry name" value="D-ALANINE--D-ALANINE LIGASE B"/>
    <property type="match status" value="1"/>
</dbReference>
<dbReference type="Pfam" id="PF07478">
    <property type="entry name" value="Dala_Dala_lig_C"/>
    <property type="match status" value="1"/>
</dbReference>
<dbReference type="Pfam" id="PF01820">
    <property type="entry name" value="Dala_Dala_lig_N"/>
    <property type="match status" value="1"/>
</dbReference>
<dbReference type="PIRSF" id="PIRSF039102">
    <property type="entry name" value="Ddl/VanB"/>
    <property type="match status" value="1"/>
</dbReference>
<dbReference type="SUPFAM" id="SSF56059">
    <property type="entry name" value="Glutathione synthetase ATP-binding domain-like"/>
    <property type="match status" value="1"/>
</dbReference>
<dbReference type="SUPFAM" id="SSF52440">
    <property type="entry name" value="PreATP-grasp domain"/>
    <property type="match status" value="1"/>
</dbReference>
<dbReference type="PROSITE" id="PS50975">
    <property type="entry name" value="ATP_GRASP"/>
    <property type="match status" value="1"/>
</dbReference>
<dbReference type="PROSITE" id="PS00843">
    <property type="entry name" value="DALA_DALA_LIGASE_1"/>
    <property type="match status" value="1"/>
</dbReference>
<dbReference type="PROSITE" id="PS00844">
    <property type="entry name" value="DALA_DALA_LIGASE_2"/>
    <property type="match status" value="1"/>
</dbReference>
<evidence type="ECO:0000250" key="1"/>
<evidence type="ECO:0000255" key="2">
    <source>
        <dbReference type="HAMAP-Rule" id="MF_00047"/>
    </source>
</evidence>